<sequence>MSKSASRARLFEIIRRRSFGRGEVTLASGRKSDFYFNLKPTMLDPEGATLLAELTYEALKDDNLDFIGGLEMGAVPLAGALAQISWIKGHPIAAFFVRKKPKEHGAKLAIEGLPRGETLQGKRVVIVEDVTTTGGSAMKAVESVRETGAEVVLVLTMVDREEGATDTFGAAGLPFRSLYKASEFLKA</sequence>
<evidence type="ECO:0000255" key="1">
    <source>
        <dbReference type="HAMAP-Rule" id="MF_01208"/>
    </source>
</evidence>
<evidence type="ECO:0000305" key="2"/>
<gene>
    <name evidence="1" type="primary">pyrE</name>
    <name type="ordered locus">blr8134</name>
</gene>
<comment type="function">
    <text evidence="1">Catalyzes the transfer of a ribosyl phosphate group from 5-phosphoribose 1-diphosphate to orotate, leading to the formation of orotidine monophosphate (OMP).</text>
</comment>
<comment type="catalytic activity">
    <reaction evidence="1">
        <text>orotidine 5'-phosphate + diphosphate = orotate + 5-phospho-alpha-D-ribose 1-diphosphate</text>
        <dbReference type="Rhea" id="RHEA:10380"/>
        <dbReference type="ChEBI" id="CHEBI:30839"/>
        <dbReference type="ChEBI" id="CHEBI:33019"/>
        <dbReference type="ChEBI" id="CHEBI:57538"/>
        <dbReference type="ChEBI" id="CHEBI:58017"/>
        <dbReference type="EC" id="2.4.2.10"/>
    </reaction>
</comment>
<comment type="cofactor">
    <cofactor evidence="1">
        <name>Mg(2+)</name>
        <dbReference type="ChEBI" id="CHEBI:18420"/>
    </cofactor>
</comment>
<comment type="pathway">
    <text evidence="1">Pyrimidine metabolism; UMP biosynthesis via de novo pathway; UMP from orotate: step 1/2.</text>
</comment>
<comment type="subunit">
    <text evidence="1">Homodimer.</text>
</comment>
<comment type="similarity">
    <text evidence="1">Belongs to the purine/pyrimidine phosphoribosyltransferase family. PyrE subfamily.</text>
</comment>
<comment type="sequence caution" evidence="2">
    <conflict type="erroneous initiation">
        <sequence resource="EMBL-CDS" id="BAC53399"/>
    </conflict>
</comment>
<dbReference type="EC" id="2.4.2.10" evidence="1"/>
<dbReference type="EMBL" id="BA000040">
    <property type="protein sequence ID" value="BAC53399.1"/>
    <property type="status" value="ALT_INIT"/>
    <property type="molecule type" value="Genomic_DNA"/>
</dbReference>
<dbReference type="RefSeq" id="NP_774774.1">
    <property type="nucleotide sequence ID" value="NC_004463.1"/>
</dbReference>
<dbReference type="RefSeq" id="WP_027547500.1">
    <property type="nucleotide sequence ID" value="NZ_CP011360.1"/>
</dbReference>
<dbReference type="SMR" id="Q89BL4"/>
<dbReference type="FunCoup" id="Q89BL4">
    <property type="interactions" value="626"/>
</dbReference>
<dbReference type="STRING" id="224911.AAV28_38365"/>
<dbReference type="EnsemblBacteria" id="BAC53399">
    <property type="protein sequence ID" value="BAC53399"/>
    <property type="gene ID" value="BAC53399"/>
</dbReference>
<dbReference type="GeneID" id="46495046"/>
<dbReference type="KEGG" id="bja:blr8134"/>
<dbReference type="PATRIC" id="fig|224911.44.peg.8304"/>
<dbReference type="eggNOG" id="COG0461">
    <property type="taxonomic scope" value="Bacteria"/>
</dbReference>
<dbReference type="HOGENOM" id="CLU_074878_2_1_5"/>
<dbReference type="InParanoid" id="Q89BL4"/>
<dbReference type="OrthoDB" id="9779060at2"/>
<dbReference type="UniPathway" id="UPA00070">
    <property type="reaction ID" value="UER00119"/>
</dbReference>
<dbReference type="Proteomes" id="UP000002526">
    <property type="component" value="Chromosome"/>
</dbReference>
<dbReference type="GO" id="GO:0000287">
    <property type="term" value="F:magnesium ion binding"/>
    <property type="evidence" value="ECO:0007669"/>
    <property type="project" value="UniProtKB-UniRule"/>
</dbReference>
<dbReference type="GO" id="GO:0004588">
    <property type="term" value="F:orotate phosphoribosyltransferase activity"/>
    <property type="evidence" value="ECO:0000318"/>
    <property type="project" value="GO_Central"/>
</dbReference>
<dbReference type="GO" id="GO:0044205">
    <property type="term" value="P:'de novo' UMP biosynthetic process"/>
    <property type="evidence" value="ECO:0007669"/>
    <property type="project" value="UniProtKB-UniRule"/>
</dbReference>
<dbReference type="GO" id="GO:0019856">
    <property type="term" value="P:pyrimidine nucleobase biosynthetic process"/>
    <property type="evidence" value="ECO:0000318"/>
    <property type="project" value="GO_Central"/>
</dbReference>
<dbReference type="GO" id="GO:0006222">
    <property type="term" value="P:UMP biosynthetic process"/>
    <property type="evidence" value="ECO:0000318"/>
    <property type="project" value="GO_Central"/>
</dbReference>
<dbReference type="CDD" id="cd06223">
    <property type="entry name" value="PRTases_typeI"/>
    <property type="match status" value="1"/>
</dbReference>
<dbReference type="FunFam" id="3.40.50.2020:FF:000029">
    <property type="entry name" value="Orotate phosphoribosyltransferase"/>
    <property type="match status" value="1"/>
</dbReference>
<dbReference type="Gene3D" id="3.40.50.2020">
    <property type="match status" value="1"/>
</dbReference>
<dbReference type="HAMAP" id="MF_01208">
    <property type="entry name" value="PyrE"/>
    <property type="match status" value="1"/>
</dbReference>
<dbReference type="InterPro" id="IPR023031">
    <property type="entry name" value="OPRT"/>
</dbReference>
<dbReference type="InterPro" id="IPR004467">
    <property type="entry name" value="Or_phspho_trans_dom"/>
</dbReference>
<dbReference type="InterPro" id="IPR000836">
    <property type="entry name" value="PRibTrfase_dom"/>
</dbReference>
<dbReference type="InterPro" id="IPR029057">
    <property type="entry name" value="PRTase-like"/>
</dbReference>
<dbReference type="NCBIfam" id="TIGR00336">
    <property type="entry name" value="pyrE"/>
    <property type="match status" value="1"/>
</dbReference>
<dbReference type="PANTHER" id="PTHR19278">
    <property type="entry name" value="OROTATE PHOSPHORIBOSYLTRANSFERASE"/>
    <property type="match status" value="1"/>
</dbReference>
<dbReference type="PANTHER" id="PTHR19278:SF9">
    <property type="entry name" value="URIDINE 5'-MONOPHOSPHATE SYNTHASE"/>
    <property type="match status" value="1"/>
</dbReference>
<dbReference type="Pfam" id="PF00156">
    <property type="entry name" value="Pribosyltran"/>
    <property type="match status" value="1"/>
</dbReference>
<dbReference type="SUPFAM" id="SSF53271">
    <property type="entry name" value="PRTase-like"/>
    <property type="match status" value="1"/>
</dbReference>
<protein>
    <recommendedName>
        <fullName evidence="1">Orotate phosphoribosyltransferase</fullName>
        <shortName evidence="1">OPRT</shortName>
        <shortName evidence="1">OPRTase</shortName>
        <ecNumber evidence="1">2.4.2.10</ecNumber>
    </recommendedName>
</protein>
<reference key="1">
    <citation type="journal article" date="2002" name="DNA Res.">
        <title>Complete genomic sequence of nitrogen-fixing symbiotic bacterium Bradyrhizobium japonicum USDA110.</title>
        <authorList>
            <person name="Kaneko T."/>
            <person name="Nakamura Y."/>
            <person name="Sato S."/>
            <person name="Minamisawa K."/>
            <person name="Uchiumi T."/>
            <person name="Sasamoto S."/>
            <person name="Watanabe A."/>
            <person name="Idesawa K."/>
            <person name="Iriguchi M."/>
            <person name="Kawashima K."/>
            <person name="Kohara M."/>
            <person name="Matsumoto M."/>
            <person name="Shimpo S."/>
            <person name="Tsuruoka H."/>
            <person name="Wada T."/>
            <person name="Yamada M."/>
            <person name="Tabata S."/>
        </authorList>
    </citation>
    <scope>NUCLEOTIDE SEQUENCE [LARGE SCALE GENOMIC DNA]</scope>
    <source>
        <strain>JCM 10833 / BCRC 13528 / IAM 13628 / NBRC 14792 / USDA 110</strain>
    </source>
</reference>
<proteinExistence type="inferred from homology"/>
<organism>
    <name type="scientific">Bradyrhizobium diazoefficiens (strain JCM 10833 / BCRC 13528 / IAM 13628 / NBRC 14792 / USDA 110)</name>
    <dbReference type="NCBI Taxonomy" id="224911"/>
    <lineage>
        <taxon>Bacteria</taxon>
        <taxon>Pseudomonadati</taxon>
        <taxon>Pseudomonadota</taxon>
        <taxon>Alphaproteobacteria</taxon>
        <taxon>Hyphomicrobiales</taxon>
        <taxon>Nitrobacteraceae</taxon>
        <taxon>Bradyrhizobium</taxon>
    </lineage>
</organism>
<keyword id="KW-0328">Glycosyltransferase</keyword>
<keyword id="KW-0460">Magnesium</keyword>
<keyword id="KW-0665">Pyrimidine biosynthesis</keyword>
<keyword id="KW-1185">Reference proteome</keyword>
<keyword id="KW-0808">Transferase</keyword>
<name>PYRE_BRADU</name>
<feature type="chain" id="PRO_0000110678" description="Orotate phosphoribosyltransferase">
    <location>
        <begin position="1"/>
        <end position="187"/>
    </location>
</feature>
<feature type="binding site" evidence="1">
    <location>
        <position position="98"/>
    </location>
    <ligand>
        <name>5-phospho-alpha-D-ribose 1-diphosphate</name>
        <dbReference type="ChEBI" id="CHEBI:58017"/>
        <note>ligand shared between dimeric partners</note>
    </ligand>
</feature>
<feature type="binding site" description="in other chain" evidence="1">
    <location>
        <position position="99"/>
    </location>
    <ligand>
        <name>5-phospho-alpha-D-ribose 1-diphosphate</name>
        <dbReference type="ChEBI" id="CHEBI:58017"/>
        <note>ligand shared between dimeric partners</note>
    </ligand>
</feature>
<feature type="binding site" evidence="1">
    <location>
        <position position="102"/>
    </location>
    <ligand>
        <name>5-phospho-alpha-D-ribose 1-diphosphate</name>
        <dbReference type="ChEBI" id="CHEBI:58017"/>
        <note>ligand shared between dimeric partners</note>
    </ligand>
</feature>
<feature type="binding site" evidence="1">
    <location>
        <position position="104"/>
    </location>
    <ligand>
        <name>5-phospho-alpha-D-ribose 1-diphosphate</name>
        <dbReference type="ChEBI" id="CHEBI:58017"/>
        <note>ligand shared between dimeric partners</note>
    </ligand>
</feature>
<feature type="binding site" description="in other chain" evidence="1">
    <location>
        <begin position="128"/>
        <end position="136"/>
    </location>
    <ligand>
        <name>5-phospho-alpha-D-ribose 1-diphosphate</name>
        <dbReference type="ChEBI" id="CHEBI:58017"/>
        <note>ligand shared between dimeric partners</note>
    </ligand>
</feature>
<feature type="binding site" evidence="1">
    <location>
        <position position="132"/>
    </location>
    <ligand>
        <name>orotate</name>
        <dbReference type="ChEBI" id="CHEBI:30839"/>
    </ligand>
</feature>
<feature type="binding site" evidence="1">
    <location>
        <position position="160"/>
    </location>
    <ligand>
        <name>orotate</name>
        <dbReference type="ChEBI" id="CHEBI:30839"/>
    </ligand>
</feature>
<accession>Q89BL4</accession>